<dbReference type="EMBL" id="BX248354">
    <property type="protein sequence ID" value="CAE48766.1"/>
    <property type="molecule type" value="Genomic_DNA"/>
</dbReference>
<dbReference type="RefSeq" id="WP_010934156.1">
    <property type="nucleotide sequence ID" value="NC_002935.2"/>
</dbReference>
<dbReference type="SMR" id="Q6NJY0"/>
<dbReference type="STRING" id="257309.DIP0261"/>
<dbReference type="GeneID" id="29422883"/>
<dbReference type="KEGG" id="cdi:DIP0261"/>
<dbReference type="HOGENOM" id="CLU_060739_1_0_11"/>
<dbReference type="Proteomes" id="UP000002198">
    <property type="component" value="Chromosome"/>
</dbReference>
<dbReference type="GO" id="GO:0003677">
    <property type="term" value="F:DNA binding"/>
    <property type="evidence" value="ECO:0007669"/>
    <property type="project" value="UniProtKB-UniRule"/>
</dbReference>
<dbReference type="GO" id="GO:0008270">
    <property type="term" value="F:zinc ion binding"/>
    <property type="evidence" value="ECO:0007669"/>
    <property type="project" value="UniProtKB-KW"/>
</dbReference>
<dbReference type="GO" id="GO:0006310">
    <property type="term" value="P:DNA recombination"/>
    <property type="evidence" value="ECO:0007669"/>
    <property type="project" value="UniProtKB-UniRule"/>
</dbReference>
<dbReference type="GO" id="GO:0006281">
    <property type="term" value="P:DNA repair"/>
    <property type="evidence" value="ECO:0007669"/>
    <property type="project" value="UniProtKB-UniRule"/>
</dbReference>
<dbReference type="CDD" id="cd01025">
    <property type="entry name" value="TOPRIM_recR"/>
    <property type="match status" value="1"/>
</dbReference>
<dbReference type="Gene3D" id="3.40.1360.10">
    <property type="match status" value="1"/>
</dbReference>
<dbReference type="Gene3D" id="6.10.250.240">
    <property type="match status" value="1"/>
</dbReference>
<dbReference type="Gene3D" id="1.10.8.420">
    <property type="entry name" value="RecR Domain 1"/>
    <property type="match status" value="1"/>
</dbReference>
<dbReference type="HAMAP" id="MF_00017">
    <property type="entry name" value="RecR"/>
    <property type="match status" value="1"/>
</dbReference>
<dbReference type="InterPro" id="IPR000093">
    <property type="entry name" value="DNA_Rcmb_RecR"/>
</dbReference>
<dbReference type="InterPro" id="IPR023627">
    <property type="entry name" value="Rcmb_RecR"/>
</dbReference>
<dbReference type="InterPro" id="IPR015967">
    <property type="entry name" value="Rcmb_RecR_Znf"/>
</dbReference>
<dbReference type="InterPro" id="IPR006171">
    <property type="entry name" value="TOPRIM_dom"/>
</dbReference>
<dbReference type="InterPro" id="IPR034137">
    <property type="entry name" value="TOPRIM_RecR"/>
</dbReference>
<dbReference type="NCBIfam" id="TIGR00615">
    <property type="entry name" value="recR"/>
    <property type="match status" value="1"/>
</dbReference>
<dbReference type="PANTHER" id="PTHR30446">
    <property type="entry name" value="RECOMBINATION PROTEIN RECR"/>
    <property type="match status" value="1"/>
</dbReference>
<dbReference type="PANTHER" id="PTHR30446:SF0">
    <property type="entry name" value="RECOMBINATION PROTEIN RECR"/>
    <property type="match status" value="1"/>
</dbReference>
<dbReference type="Pfam" id="PF21175">
    <property type="entry name" value="RecR_C"/>
    <property type="match status" value="1"/>
</dbReference>
<dbReference type="Pfam" id="PF21176">
    <property type="entry name" value="RecR_HhH"/>
    <property type="match status" value="1"/>
</dbReference>
<dbReference type="Pfam" id="PF02132">
    <property type="entry name" value="RecR_ZnF"/>
    <property type="match status" value="1"/>
</dbReference>
<dbReference type="Pfam" id="PF13662">
    <property type="entry name" value="Toprim_4"/>
    <property type="match status" value="1"/>
</dbReference>
<dbReference type="SMART" id="SM00493">
    <property type="entry name" value="TOPRIM"/>
    <property type="match status" value="1"/>
</dbReference>
<dbReference type="SUPFAM" id="SSF111304">
    <property type="entry name" value="Recombination protein RecR"/>
    <property type="match status" value="1"/>
</dbReference>
<dbReference type="PROSITE" id="PS01300">
    <property type="entry name" value="RECR"/>
    <property type="match status" value="1"/>
</dbReference>
<dbReference type="PROSITE" id="PS50880">
    <property type="entry name" value="TOPRIM"/>
    <property type="match status" value="1"/>
</dbReference>
<name>RECR_CORDI</name>
<organism>
    <name type="scientific">Corynebacterium diphtheriae (strain ATCC 700971 / NCTC 13129 / Biotype gravis)</name>
    <dbReference type="NCBI Taxonomy" id="257309"/>
    <lineage>
        <taxon>Bacteria</taxon>
        <taxon>Bacillati</taxon>
        <taxon>Actinomycetota</taxon>
        <taxon>Actinomycetes</taxon>
        <taxon>Mycobacteriales</taxon>
        <taxon>Corynebacteriaceae</taxon>
        <taxon>Corynebacterium</taxon>
    </lineage>
</organism>
<evidence type="ECO:0000255" key="1">
    <source>
        <dbReference type="HAMAP-Rule" id="MF_00017"/>
    </source>
</evidence>
<proteinExistence type="inferred from homology"/>
<accession>Q6NJY0</accession>
<gene>
    <name evidence="1" type="primary">recR</name>
    <name type="ordered locus">DIP0261</name>
</gene>
<sequence>MFEGPLQDLIDEFSRLPGVGPKSAQRIAFHLLHVEPADITRLQDALGAIRDGVTFCRICCNISREEVCRICADSSRDRSTICVVEEPKDIQVIERTGEYTGRYHVLGGSLDPLANIGPRELNISQLLQRIGGVLPDRELADSTPETPLYDASPEVREVILATDPNTEGEATASYLARLLRDFPDLVVSRLASGMPLGGDLEFVDELTLSRALSGRLTL</sequence>
<protein>
    <recommendedName>
        <fullName evidence="1">Recombination protein RecR</fullName>
    </recommendedName>
</protein>
<feature type="chain" id="PRO_0000190311" description="Recombination protein RecR">
    <location>
        <begin position="1"/>
        <end position="218"/>
    </location>
</feature>
<feature type="domain" description="Toprim" evidence="1">
    <location>
        <begin position="79"/>
        <end position="195"/>
    </location>
</feature>
<feature type="zinc finger region" description="C4-type" evidence="1">
    <location>
        <begin position="56"/>
        <end position="71"/>
    </location>
</feature>
<reference key="1">
    <citation type="journal article" date="2003" name="Nucleic Acids Res.">
        <title>The complete genome sequence and analysis of Corynebacterium diphtheriae NCTC13129.</title>
        <authorList>
            <person name="Cerdeno-Tarraga A.-M."/>
            <person name="Efstratiou A."/>
            <person name="Dover L.G."/>
            <person name="Holden M.T.G."/>
            <person name="Pallen M.J."/>
            <person name="Bentley S.D."/>
            <person name="Besra G.S."/>
            <person name="Churcher C.M."/>
            <person name="James K.D."/>
            <person name="De Zoysa A."/>
            <person name="Chillingworth T."/>
            <person name="Cronin A."/>
            <person name="Dowd L."/>
            <person name="Feltwell T."/>
            <person name="Hamlin N."/>
            <person name="Holroyd S."/>
            <person name="Jagels K."/>
            <person name="Moule S."/>
            <person name="Quail M.A."/>
            <person name="Rabbinowitsch E."/>
            <person name="Rutherford K.M."/>
            <person name="Thomson N.R."/>
            <person name="Unwin L."/>
            <person name="Whitehead S."/>
            <person name="Barrell B.G."/>
            <person name="Parkhill J."/>
        </authorList>
    </citation>
    <scope>NUCLEOTIDE SEQUENCE [LARGE SCALE GENOMIC DNA]</scope>
    <source>
        <strain>ATCC 700971 / NCTC 13129 / Biotype gravis</strain>
    </source>
</reference>
<keyword id="KW-0227">DNA damage</keyword>
<keyword id="KW-0233">DNA recombination</keyword>
<keyword id="KW-0234">DNA repair</keyword>
<keyword id="KW-0479">Metal-binding</keyword>
<keyword id="KW-1185">Reference proteome</keyword>
<keyword id="KW-0862">Zinc</keyword>
<keyword id="KW-0863">Zinc-finger</keyword>
<comment type="function">
    <text evidence="1">May play a role in DNA repair. It seems to be involved in an RecBC-independent recombinational process of DNA repair. It may act with RecF and RecO.</text>
</comment>
<comment type="similarity">
    <text evidence="1">Belongs to the RecR family.</text>
</comment>